<name>PDXJ_HELPG</name>
<feature type="chain" id="PRO_1000114812" description="Pyridoxine 5'-phosphate synthase">
    <location>
        <begin position="1"/>
        <end position="262"/>
    </location>
</feature>
<feature type="active site" description="Proton acceptor" evidence="1">
    <location>
        <position position="43"/>
    </location>
</feature>
<feature type="active site" description="Proton acceptor" evidence="1">
    <location>
        <position position="70"/>
    </location>
</feature>
<feature type="active site" description="Proton donor" evidence="1">
    <location>
        <position position="215"/>
    </location>
</feature>
<feature type="binding site" evidence="1">
    <location>
        <position position="6"/>
    </location>
    <ligand>
        <name>3-amino-2-oxopropyl phosphate</name>
        <dbReference type="ChEBI" id="CHEBI:57279"/>
    </ligand>
</feature>
<feature type="binding site" evidence="1">
    <location>
        <begin position="8"/>
        <end position="9"/>
    </location>
    <ligand>
        <name>1-deoxy-D-xylulose 5-phosphate</name>
        <dbReference type="ChEBI" id="CHEBI:57792"/>
    </ligand>
</feature>
<feature type="binding site" evidence="1">
    <location>
        <position position="17"/>
    </location>
    <ligand>
        <name>3-amino-2-oxopropyl phosphate</name>
        <dbReference type="ChEBI" id="CHEBI:57279"/>
    </ligand>
</feature>
<feature type="binding site" evidence="1">
    <location>
        <position position="45"/>
    </location>
    <ligand>
        <name>1-deoxy-D-xylulose 5-phosphate</name>
        <dbReference type="ChEBI" id="CHEBI:57792"/>
    </ligand>
</feature>
<feature type="binding site" evidence="1">
    <location>
        <position position="50"/>
    </location>
    <ligand>
        <name>1-deoxy-D-xylulose 5-phosphate</name>
        <dbReference type="ChEBI" id="CHEBI:57792"/>
    </ligand>
</feature>
<feature type="binding site" evidence="1">
    <location>
        <position position="102"/>
    </location>
    <ligand>
        <name>1-deoxy-D-xylulose 5-phosphate</name>
        <dbReference type="ChEBI" id="CHEBI:57792"/>
    </ligand>
</feature>
<feature type="binding site" evidence="1">
    <location>
        <position position="216"/>
    </location>
    <ligand>
        <name>3-amino-2-oxopropyl phosphate</name>
        <dbReference type="ChEBI" id="CHEBI:57279"/>
    </ligand>
</feature>
<feature type="binding site" evidence="1">
    <location>
        <begin position="237"/>
        <end position="238"/>
    </location>
    <ligand>
        <name>3-amino-2-oxopropyl phosphate</name>
        <dbReference type="ChEBI" id="CHEBI:57279"/>
    </ligand>
</feature>
<feature type="site" description="Transition state stabilizer" evidence="1">
    <location>
        <position position="151"/>
    </location>
</feature>
<reference key="1">
    <citation type="journal article" date="2009" name="J. Bacteriol.">
        <title>The complete genome sequence of Helicobacter pylori strain G27.</title>
        <authorList>
            <person name="Baltrus D.A."/>
            <person name="Amieva M.R."/>
            <person name="Covacci A."/>
            <person name="Lowe T.M."/>
            <person name="Merrell D.S."/>
            <person name="Ottemann K.M."/>
            <person name="Stein M."/>
            <person name="Salama N.R."/>
            <person name="Guillemin K."/>
        </authorList>
    </citation>
    <scope>NUCLEOTIDE SEQUENCE [LARGE SCALE GENOMIC DNA]</scope>
    <source>
        <strain>G27</strain>
    </source>
</reference>
<dbReference type="EC" id="2.6.99.2" evidence="1"/>
<dbReference type="EMBL" id="CP001173">
    <property type="protein sequence ID" value="ACI28261.1"/>
    <property type="molecule type" value="Genomic_DNA"/>
</dbReference>
<dbReference type="RefSeq" id="WP_001210902.1">
    <property type="nucleotide sequence ID" value="NC_011333.1"/>
</dbReference>
<dbReference type="SMR" id="B5Z9L2"/>
<dbReference type="KEGG" id="hpg:HPG27_1519"/>
<dbReference type="HOGENOM" id="CLU_074563_0_0_7"/>
<dbReference type="UniPathway" id="UPA00244">
    <property type="reaction ID" value="UER00313"/>
</dbReference>
<dbReference type="Proteomes" id="UP000001735">
    <property type="component" value="Chromosome"/>
</dbReference>
<dbReference type="GO" id="GO:0005829">
    <property type="term" value="C:cytosol"/>
    <property type="evidence" value="ECO:0007669"/>
    <property type="project" value="TreeGrafter"/>
</dbReference>
<dbReference type="GO" id="GO:0033856">
    <property type="term" value="F:pyridoxine 5'-phosphate synthase activity"/>
    <property type="evidence" value="ECO:0007669"/>
    <property type="project" value="UniProtKB-EC"/>
</dbReference>
<dbReference type="GO" id="GO:0008615">
    <property type="term" value="P:pyridoxine biosynthetic process"/>
    <property type="evidence" value="ECO:0007669"/>
    <property type="project" value="UniProtKB-UniRule"/>
</dbReference>
<dbReference type="CDD" id="cd00003">
    <property type="entry name" value="PNPsynthase"/>
    <property type="match status" value="1"/>
</dbReference>
<dbReference type="FunFam" id="3.20.20.70:FF:000264">
    <property type="entry name" value="Pyridoxine 5'-phosphate synthase"/>
    <property type="match status" value="1"/>
</dbReference>
<dbReference type="Gene3D" id="3.20.20.70">
    <property type="entry name" value="Aldolase class I"/>
    <property type="match status" value="1"/>
</dbReference>
<dbReference type="HAMAP" id="MF_00279">
    <property type="entry name" value="PdxJ"/>
    <property type="match status" value="1"/>
</dbReference>
<dbReference type="InterPro" id="IPR013785">
    <property type="entry name" value="Aldolase_TIM"/>
</dbReference>
<dbReference type="InterPro" id="IPR004569">
    <property type="entry name" value="PyrdxlP_synth_PdxJ"/>
</dbReference>
<dbReference type="InterPro" id="IPR036130">
    <property type="entry name" value="Pyridoxine-5'_phos_synth"/>
</dbReference>
<dbReference type="NCBIfam" id="TIGR00559">
    <property type="entry name" value="pdxJ"/>
    <property type="match status" value="1"/>
</dbReference>
<dbReference type="NCBIfam" id="NF003625">
    <property type="entry name" value="PRK05265.1-3"/>
    <property type="match status" value="1"/>
</dbReference>
<dbReference type="NCBIfam" id="NF003627">
    <property type="entry name" value="PRK05265.1-5"/>
    <property type="match status" value="1"/>
</dbReference>
<dbReference type="PANTHER" id="PTHR30456">
    <property type="entry name" value="PYRIDOXINE 5'-PHOSPHATE SYNTHASE"/>
    <property type="match status" value="1"/>
</dbReference>
<dbReference type="PANTHER" id="PTHR30456:SF0">
    <property type="entry name" value="PYRIDOXINE 5'-PHOSPHATE SYNTHASE"/>
    <property type="match status" value="1"/>
</dbReference>
<dbReference type="Pfam" id="PF03740">
    <property type="entry name" value="PdxJ"/>
    <property type="match status" value="1"/>
</dbReference>
<dbReference type="SUPFAM" id="SSF63892">
    <property type="entry name" value="Pyridoxine 5'-phosphate synthase"/>
    <property type="match status" value="1"/>
</dbReference>
<protein>
    <recommendedName>
        <fullName evidence="1">Pyridoxine 5'-phosphate synthase</fullName>
        <shortName evidence="1">PNP synthase</shortName>
        <ecNumber evidence="1">2.6.99.2</ecNumber>
    </recommendedName>
</protein>
<evidence type="ECO:0000255" key="1">
    <source>
        <dbReference type="HAMAP-Rule" id="MF_00279"/>
    </source>
</evidence>
<organism>
    <name type="scientific">Helicobacter pylori (strain G27)</name>
    <dbReference type="NCBI Taxonomy" id="563041"/>
    <lineage>
        <taxon>Bacteria</taxon>
        <taxon>Pseudomonadati</taxon>
        <taxon>Campylobacterota</taxon>
        <taxon>Epsilonproteobacteria</taxon>
        <taxon>Campylobacterales</taxon>
        <taxon>Helicobacteraceae</taxon>
        <taxon>Helicobacter</taxon>
    </lineage>
</organism>
<proteinExistence type="inferred from homology"/>
<gene>
    <name evidence="1" type="primary">pdxJ</name>
    <name type="ordered locus">HPG27_1519</name>
</gene>
<comment type="function">
    <text evidence="1">Catalyzes the complicated ring closure reaction between the two acyclic compounds 1-deoxy-D-xylulose-5-phosphate (DXP) and 3-amino-2-oxopropyl phosphate (1-amino-acetone-3-phosphate or AAP) to form pyridoxine 5'-phosphate (PNP) and inorganic phosphate.</text>
</comment>
<comment type="catalytic activity">
    <reaction evidence="1">
        <text>3-amino-2-oxopropyl phosphate + 1-deoxy-D-xylulose 5-phosphate = pyridoxine 5'-phosphate + phosphate + 2 H2O + H(+)</text>
        <dbReference type="Rhea" id="RHEA:15265"/>
        <dbReference type="ChEBI" id="CHEBI:15377"/>
        <dbReference type="ChEBI" id="CHEBI:15378"/>
        <dbReference type="ChEBI" id="CHEBI:43474"/>
        <dbReference type="ChEBI" id="CHEBI:57279"/>
        <dbReference type="ChEBI" id="CHEBI:57792"/>
        <dbReference type="ChEBI" id="CHEBI:58589"/>
        <dbReference type="EC" id="2.6.99.2"/>
    </reaction>
</comment>
<comment type="pathway">
    <text evidence="1">Cofactor biosynthesis; pyridoxine 5'-phosphate biosynthesis; pyridoxine 5'-phosphate from D-erythrose 4-phosphate: step 5/5.</text>
</comment>
<comment type="subunit">
    <text evidence="1">Homooctamer; tetramer of dimers.</text>
</comment>
<comment type="subcellular location">
    <subcellularLocation>
        <location evidence="1">Cytoplasm</location>
    </subcellularLocation>
</comment>
<comment type="similarity">
    <text evidence="1">Belongs to the PNP synthase family.</text>
</comment>
<keyword id="KW-0963">Cytoplasm</keyword>
<keyword id="KW-0664">Pyridoxine biosynthesis</keyword>
<keyword id="KW-1185">Reference proteome</keyword>
<keyword id="KW-0808">Transferase</keyword>
<sequence>MRFGLNIDHIVTLREVRKTYEPEILEALFIAKNTHKVDLITIHLREDRRHIQNEDVLRLLEISPLPINIECSINAAITDFLCSLKNKPSKVTIVPENRNEVTTEGGLDCSLKGLEEVIRAYHNKGIEVSLFIDPLKDALHFAREHQVKQVEFHTGVYANLHNALYSNANNQIHAISALKDKSPKELKEELHNAFLQLRRMSKEAFFMGITACAGHGLNYTNVKELLKIPSLRELNIGHSVVSKAVLVGLEKAILEMAQLIKR</sequence>
<accession>B5Z9L2</accession>